<feature type="chain" id="PRO_0000320708" description="Sorting nexin-32">
    <location>
        <begin position="1"/>
        <end position="404"/>
    </location>
</feature>
<feature type="domain" description="PX" evidence="3">
    <location>
        <begin position="21"/>
        <end position="168"/>
    </location>
</feature>
<feature type="region of interest" description="Disordered" evidence="4">
    <location>
        <begin position="1"/>
        <end position="29"/>
    </location>
</feature>
<feature type="coiled-coil region" evidence="2">
    <location>
        <begin position="255"/>
        <end position="336"/>
    </location>
</feature>
<feature type="compositionally biased region" description="Basic and acidic residues" evidence="4">
    <location>
        <begin position="1"/>
        <end position="10"/>
    </location>
</feature>
<feature type="compositionally biased region" description="Polar residues" evidence="4">
    <location>
        <begin position="11"/>
        <end position="20"/>
    </location>
</feature>
<gene>
    <name type="primary">Snx32</name>
    <name type="synonym">Snx6b</name>
</gene>
<organism>
    <name type="scientific">Mus musculus</name>
    <name type="common">Mouse</name>
    <dbReference type="NCBI Taxonomy" id="10090"/>
    <lineage>
        <taxon>Eukaryota</taxon>
        <taxon>Metazoa</taxon>
        <taxon>Chordata</taxon>
        <taxon>Craniata</taxon>
        <taxon>Vertebrata</taxon>
        <taxon>Euteleostomi</taxon>
        <taxon>Mammalia</taxon>
        <taxon>Eutheria</taxon>
        <taxon>Euarchontoglires</taxon>
        <taxon>Glires</taxon>
        <taxon>Rodentia</taxon>
        <taxon>Myomorpha</taxon>
        <taxon>Muroidea</taxon>
        <taxon>Muridae</taxon>
        <taxon>Murinae</taxon>
        <taxon>Mus</taxon>
        <taxon>Mus</taxon>
    </lineage>
</organism>
<comment type="function">
    <text evidence="1">May be involved in several stages of intracellular trafficking.</text>
</comment>
<comment type="similarity">
    <text evidence="5">Belongs to the sorting nexin family.</text>
</comment>
<dbReference type="EMBL" id="BC048922">
    <property type="protein sequence ID" value="AAH48922.1"/>
    <property type="molecule type" value="mRNA"/>
</dbReference>
<dbReference type="CCDS" id="CCDS29468.1"/>
<dbReference type="RefSeq" id="NP_001019731.1">
    <property type="nucleotide sequence ID" value="NM_001024560.3"/>
</dbReference>
<dbReference type="SMR" id="Q80ZJ7"/>
<dbReference type="FunCoup" id="Q80ZJ7">
    <property type="interactions" value="542"/>
</dbReference>
<dbReference type="STRING" id="10090.ENSMUSP00000070915"/>
<dbReference type="PhosphoSitePlus" id="Q80ZJ7"/>
<dbReference type="PaxDb" id="10090-ENSMUSP00000070915"/>
<dbReference type="PeptideAtlas" id="Q80ZJ7"/>
<dbReference type="ProteomicsDB" id="261302"/>
<dbReference type="Antibodypedia" id="29952">
    <property type="antibodies" value="122 antibodies from 21 providers"/>
</dbReference>
<dbReference type="DNASU" id="225861"/>
<dbReference type="Ensembl" id="ENSMUST00000070172.6">
    <property type="protein sequence ID" value="ENSMUSP00000070915.5"/>
    <property type="gene ID" value="ENSMUSG00000056185.6"/>
</dbReference>
<dbReference type="GeneID" id="225861"/>
<dbReference type="KEGG" id="mmu:225861"/>
<dbReference type="UCSC" id="uc008gdr.1">
    <property type="organism name" value="mouse"/>
</dbReference>
<dbReference type="AGR" id="MGI:2444704"/>
<dbReference type="CTD" id="254122"/>
<dbReference type="MGI" id="MGI:2444704">
    <property type="gene designation" value="Snx32"/>
</dbReference>
<dbReference type="VEuPathDB" id="HostDB:ENSMUSG00000056185"/>
<dbReference type="eggNOG" id="KOG1660">
    <property type="taxonomic scope" value="Eukaryota"/>
</dbReference>
<dbReference type="GeneTree" id="ENSGT00940000162773"/>
<dbReference type="HOGENOM" id="CLU_040966_0_0_1"/>
<dbReference type="InParanoid" id="Q80ZJ7"/>
<dbReference type="OMA" id="ETHQQLC"/>
<dbReference type="PhylomeDB" id="Q80ZJ7"/>
<dbReference type="TreeFam" id="TF313698"/>
<dbReference type="BioGRID-ORCS" id="225861">
    <property type="hits" value="1 hit in 76 CRISPR screens"/>
</dbReference>
<dbReference type="PRO" id="PR:Q80ZJ7"/>
<dbReference type="Proteomes" id="UP000000589">
    <property type="component" value="Chromosome 19"/>
</dbReference>
<dbReference type="RNAct" id="Q80ZJ7">
    <property type="molecule type" value="protein"/>
</dbReference>
<dbReference type="Bgee" id="ENSMUSG00000056185">
    <property type="expression patterns" value="Expressed in superior frontal gyrus and 122 other cell types or tissues"/>
</dbReference>
<dbReference type="ExpressionAtlas" id="Q80ZJ7">
    <property type="expression patterns" value="baseline and differential"/>
</dbReference>
<dbReference type="GO" id="GO:0035091">
    <property type="term" value="F:phosphatidylinositol binding"/>
    <property type="evidence" value="ECO:0007669"/>
    <property type="project" value="InterPro"/>
</dbReference>
<dbReference type="GO" id="GO:0015031">
    <property type="term" value="P:protein transport"/>
    <property type="evidence" value="ECO:0007669"/>
    <property type="project" value="UniProtKB-KW"/>
</dbReference>
<dbReference type="CDD" id="cd07621">
    <property type="entry name" value="BAR_SNX5_6"/>
    <property type="match status" value="1"/>
</dbReference>
<dbReference type="FunFam" id="1.20.1270.60:FF:000008">
    <property type="entry name" value="Sorting nexin"/>
    <property type="match status" value="1"/>
</dbReference>
<dbReference type="FunFam" id="3.30.1520.10:FF:000001">
    <property type="entry name" value="Sorting nexin"/>
    <property type="match status" value="1"/>
</dbReference>
<dbReference type="Gene3D" id="1.20.1270.60">
    <property type="entry name" value="Arfaptin homology (AH) domain/BAR domain"/>
    <property type="match status" value="1"/>
</dbReference>
<dbReference type="Gene3D" id="3.30.1520.10">
    <property type="entry name" value="Phox-like domain"/>
    <property type="match status" value="1"/>
</dbReference>
<dbReference type="InterPro" id="IPR027267">
    <property type="entry name" value="AH/BAR_dom_sf"/>
</dbReference>
<dbReference type="InterPro" id="IPR001683">
    <property type="entry name" value="PX_dom"/>
</dbReference>
<dbReference type="InterPro" id="IPR036871">
    <property type="entry name" value="PX_dom_sf"/>
</dbReference>
<dbReference type="InterPro" id="IPR014637">
    <property type="entry name" value="SNX5/SNX6/SNX32"/>
</dbReference>
<dbReference type="InterPro" id="IPR015404">
    <property type="entry name" value="Vps5_C"/>
</dbReference>
<dbReference type="PANTHER" id="PTHR45850">
    <property type="entry name" value="SORTING NEXIN FAMILY MEMBER"/>
    <property type="match status" value="1"/>
</dbReference>
<dbReference type="PANTHER" id="PTHR45850:SF3">
    <property type="entry name" value="SORTING NEXIN-32"/>
    <property type="match status" value="1"/>
</dbReference>
<dbReference type="Pfam" id="PF00787">
    <property type="entry name" value="PX"/>
    <property type="match status" value="1"/>
</dbReference>
<dbReference type="Pfam" id="PF09325">
    <property type="entry name" value="Vps5"/>
    <property type="match status" value="1"/>
</dbReference>
<dbReference type="PIRSF" id="PIRSF036924">
    <property type="entry name" value="Snx5_Snx6"/>
    <property type="match status" value="1"/>
</dbReference>
<dbReference type="SUPFAM" id="SSF64268">
    <property type="entry name" value="PX domain"/>
    <property type="match status" value="1"/>
</dbReference>
<dbReference type="PROSITE" id="PS50195">
    <property type="entry name" value="PX"/>
    <property type="match status" value="1"/>
</dbReference>
<sequence length="404" mass="46647">MEEQHQEAGNESKPSSTSVDLQGDSPLQVEISDAVSERDKVKFTVQTKSGLPHFAQSEFSVVRQHEEFIWLHDTYVENEEYAGLIIPPAPPRPDFEASREKLQKLGEGNSSITREEFSKMKQELEAEYLAIFKKTVAMHEVFLQRLAAHPTLRRDHNFSVFLEYSQDLSVREKNRKEVLGGLLRSIVRSADEVLITGISGLKEVDDFFEHERTFLVEYHTRIRDTCQRADRVMHSHKCLADNYIPISAALSSLGTQEVNQLKRSFLKLAELFERLRKLEGRVASDEDLKLSDMLRYYMRDSQAAKDLLYRRLRALADYENANKALDKARTRNREVRPAESRQQLCCQRFERLSDSAKQELMDFKSRRVSSFRKNLIELAELELKHAKASTLLLQNTLVALKGEP</sequence>
<reference key="1">
    <citation type="journal article" date="2004" name="Genome Res.">
        <title>The status, quality, and expansion of the NIH full-length cDNA project: the Mammalian Gene Collection (MGC).</title>
        <authorList>
            <consortium name="The MGC Project Team"/>
        </authorList>
    </citation>
    <scope>NUCLEOTIDE SEQUENCE [LARGE SCALE MRNA]</scope>
    <source>
        <tissue>Olfactory epithelium</tissue>
    </source>
</reference>
<evidence type="ECO:0000250" key="1"/>
<evidence type="ECO:0000255" key="2"/>
<evidence type="ECO:0000255" key="3">
    <source>
        <dbReference type="PROSITE-ProRule" id="PRU00147"/>
    </source>
</evidence>
<evidence type="ECO:0000256" key="4">
    <source>
        <dbReference type="SAM" id="MobiDB-lite"/>
    </source>
</evidence>
<evidence type="ECO:0000305" key="5"/>
<accession>Q80ZJ7</accession>
<proteinExistence type="evidence at transcript level"/>
<name>SNX32_MOUSE</name>
<keyword id="KW-0175">Coiled coil</keyword>
<keyword id="KW-0653">Protein transport</keyword>
<keyword id="KW-1185">Reference proteome</keyword>
<keyword id="KW-0813">Transport</keyword>
<protein>
    <recommendedName>
        <fullName>Sorting nexin-32</fullName>
    </recommendedName>
    <alternativeName>
        <fullName>Sorting nexin-6B</fullName>
    </alternativeName>
</protein>